<evidence type="ECO:0000255" key="1">
    <source>
        <dbReference type="HAMAP-Rule" id="MF_00072"/>
    </source>
</evidence>
<reference key="1">
    <citation type="journal article" date="2007" name="PLoS Genet.">
        <title>The complete genome sequence of Yersinia pseudotuberculosis IP31758, the causative agent of Far East scarlet-like fever.</title>
        <authorList>
            <person name="Eppinger M."/>
            <person name="Rosovitz M.J."/>
            <person name="Fricke W.F."/>
            <person name="Rasko D.A."/>
            <person name="Kokorina G."/>
            <person name="Fayolle C."/>
            <person name="Lindler L.E."/>
            <person name="Carniel E."/>
            <person name="Ravel J."/>
        </authorList>
    </citation>
    <scope>NUCLEOTIDE SEQUENCE [LARGE SCALE GENOMIC DNA]</scope>
    <source>
        <strain>IP 31758</strain>
    </source>
</reference>
<protein>
    <recommendedName>
        <fullName evidence="1">Peptide chain release factor 3</fullName>
        <shortName evidence="1">RF-3</shortName>
    </recommendedName>
</protein>
<feature type="chain" id="PRO_1000057489" description="Peptide chain release factor 3">
    <location>
        <begin position="1"/>
        <end position="529"/>
    </location>
</feature>
<feature type="domain" description="tr-type G">
    <location>
        <begin position="11"/>
        <end position="280"/>
    </location>
</feature>
<feature type="binding site" evidence="1">
    <location>
        <begin position="20"/>
        <end position="27"/>
    </location>
    <ligand>
        <name>GTP</name>
        <dbReference type="ChEBI" id="CHEBI:37565"/>
    </ligand>
</feature>
<feature type="binding site" evidence="1">
    <location>
        <begin position="88"/>
        <end position="92"/>
    </location>
    <ligand>
        <name>GTP</name>
        <dbReference type="ChEBI" id="CHEBI:37565"/>
    </ligand>
</feature>
<feature type="binding site" evidence="1">
    <location>
        <begin position="142"/>
        <end position="145"/>
    </location>
    <ligand>
        <name>GTP</name>
        <dbReference type="ChEBI" id="CHEBI:37565"/>
    </ligand>
</feature>
<keyword id="KW-0963">Cytoplasm</keyword>
<keyword id="KW-0342">GTP-binding</keyword>
<keyword id="KW-0547">Nucleotide-binding</keyword>
<keyword id="KW-0648">Protein biosynthesis</keyword>
<proteinExistence type="inferred from homology"/>
<comment type="function">
    <text evidence="1">Increases the formation of ribosomal termination complexes and stimulates activities of RF-1 and RF-2. It binds guanine nucleotides and has strong preference for UGA stop codons. It may interact directly with the ribosome. The stimulation of RF-1 and RF-2 is significantly reduced by GTP and GDP, but not by GMP.</text>
</comment>
<comment type="subcellular location">
    <subcellularLocation>
        <location evidence="1">Cytoplasm</location>
    </subcellularLocation>
</comment>
<comment type="similarity">
    <text evidence="1">Belongs to the TRAFAC class translation factor GTPase superfamily. Classic translation factor GTPase family. PrfC subfamily.</text>
</comment>
<accession>A7FMI1</accession>
<organism>
    <name type="scientific">Yersinia pseudotuberculosis serotype O:1b (strain IP 31758)</name>
    <dbReference type="NCBI Taxonomy" id="349747"/>
    <lineage>
        <taxon>Bacteria</taxon>
        <taxon>Pseudomonadati</taxon>
        <taxon>Pseudomonadota</taxon>
        <taxon>Gammaproteobacteria</taxon>
        <taxon>Enterobacterales</taxon>
        <taxon>Yersiniaceae</taxon>
        <taxon>Yersinia</taxon>
    </lineage>
</organism>
<name>RF3_YERP3</name>
<sequence length="529" mass="59617">MSPSEYALEVAKRRTFAIISHPDAGKTTITEKVLLFGHAIQTAGTVKGRGSSHHAKSDWMEMEKQRGISITTSVMQFPYGGCLVNLLDTPGHEDFSEDTYRTLTAVDCCLMVIDAAKGVEDRTRKLMEVTRLRDTPILTFMNKLDREIRDPMEVLDEVERELNIACSPITWPIGCGKSFKGVYHLHKDETYLYQSGKGHTIQEVRIVKGLNNPDLDVAVGEDLAKQFRQELELVQGASHEFDHEAFLSGDLTPVFFGTALGNFGVDHMLDGLVEWAPAPMPRKTDTRVVVASEEKFTGFVFKIQANMDPKHRDRVAFMRVVSGRFEKGMKLRQVRTKKDVVISDALTFMAGDRSHVEEAYAGDIIGLHNHGTIQIGDTFTQGEDMKFTGIPNFAPELFRRIRLRDPLKQKQLLKGLVQLSEEGAVQVFRPLSNNDLIVGAVGVLQFEVVSSRLKSEYNVEAVYESVNVSTARWVECNDVKKFEEFKRKNELNLALDGGDNLSYIAPTMVNLNITQERYPDVIFRKTREH</sequence>
<dbReference type="EMBL" id="CP000720">
    <property type="protein sequence ID" value="ABS45822.1"/>
    <property type="molecule type" value="Genomic_DNA"/>
</dbReference>
<dbReference type="RefSeq" id="WP_011191681.1">
    <property type="nucleotide sequence ID" value="NC_009708.1"/>
</dbReference>
<dbReference type="SMR" id="A7FMI1"/>
<dbReference type="GeneID" id="49787425"/>
<dbReference type="KEGG" id="ypi:YpsIP31758_3504"/>
<dbReference type="HOGENOM" id="CLU_002794_2_1_6"/>
<dbReference type="Proteomes" id="UP000002412">
    <property type="component" value="Chromosome"/>
</dbReference>
<dbReference type="GO" id="GO:0005829">
    <property type="term" value="C:cytosol"/>
    <property type="evidence" value="ECO:0007669"/>
    <property type="project" value="TreeGrafter"/>
</dbReference>
<dbReference type="GO" id="GO:0005525">
    <property type="term" value="F:GTP binding"/>
    <property type="evidence" value="ECO:0007669"/>
    <property type="project" value="UniProtKB-UniRule"/>
</dbReference>
<dbReference type="GO" id="GO:0003924">
    <property type="term" value="F:GTPase activity"/>
    <property type="evidence" value="ECO:0007669"/>
    <property type="project" value="InterPro"/>
</dbReference>
<dbReference type="GO" id="GO:0097216">
    <property type="term" value="F:guanosine tetraphosphate binding"/>
    <property type="evidence" value="ECO:0007669"/>
    <property type="project" value="UniProtKB-ARBA"/>
</dbReference>
<dbReference type="GO" id="GO:0016150">
    <property type="term" value="F:translation release factor activity, codon nonspecific"/>
    <property type="evidence" value="ECO:0007669"/>
    <property type="project" value="TreeGrafter"/>
</dbReference>
<dbReference type="GO" id="GO:0016149">
    <property type="term" value="F:translation release factor activity, codon specific"/>
    <property type="evidence" value="ECO:0007669"/>
    <property type="project" value="UniProtKB-UniRule"/>
</dbReference>
<dbReference type="GO" id="GO:0006449">
    <property type="term" value="P:regulation of translational termination"/>
    <property type="evidence" value="ECO:0007669"/>
    <property type="project" value="UniProtKB-UniRule"/>
</dbReference>
<dbReference type="CDD" id="cd04169">
    <property type="entry name" value="RF3"/>
    <property type="match status" value="1"/>
</dbReference>
<dbReference type="CDD" id="cd03689">
    <property type="entry name" value="RF3_II"/>
    <property type="match status" value="1"/>
</dbReference>
<dbReference type="CDD" id="cd16259">
    <property type="entry name" value="RF3_III"/>
    <property type="match status" value="1"/>
</dbReference>
<dbReference type="FunFam" id="2.40.30.10:FF:000040">
    <property type="entry name" value="Peptide chain release factor 3"/>
    <property type="match status" value="1"/>
</dbReference>
<dbReference type="FunFam" id="3.30.70.3280:FF:000001">
    <property type="entry name" value="Peptide chain release factor 3"/>
    <property type="match status" value="1"/>
</dbReference>
<dbReference type="FunFam" id="3.40.50.300:FF:000542">
    <property type="entry name" value="Peptide chain release factor 3"/>
    <property type="match status" value="1"/>
</dbReference>
<dbReference type="Gene3D" id="3.40.50.300">
    <property type="entry name" value="P-loop containing nucleotide triphosphate hydrolases"/>
    <property type="match status" value="2"/>
</dbReference>
<dbReference type="Gene3D" id="3.30.70.3280">
    <property type="entry name" value="Peptide chain release factor 3, domain III"/>
    <property type="match status" value="1"/>
</dbReference>
<dbReference type="HAMAP" id="MF_00072">
    <property type="entry name" value="Rel_fac_3"/>
    <property type="match status" value="1"/>
</dbReference>
<dbReference type="InterPro" id="IPR053905">
    <property type="entry name" value="EF-G-like_DII"/>
</dbReference>
<dbReference type="InterPro" id="IPR035647">
    <property type="entry name" value="EFG_III/V"/>
</dbReference>
<dbReference type="InterPro" id="IPR031157">
    <property type="entry name" value="G_TR_CS"/>
</dbReference>
<dbReference type="InterPro" id="IPR027417">
    <property type="entry name" value="P-loop_NTPase"/>
</dbReference>
<dbReference type="InterPro" id="IPR004548">
    <property type="entry name" value="PrfC"/>
</dbReference>
<dbReference type="InterPro" id="IPR032090">
    <property type="entry name" value="RF3_C"/>
</dbReference>
<dbReference type="InterPro" id="IPR038467">
    <property type="entry name" value="RF3_dom_3_sf"/>
</dbReference>
<dbReference type="InterPro" id="IPR041732">
    <property type="entry name" value="RF3_GTP-bd"/>
</dbReference>
<dbReference type="InterPro" id="IPR005225">
    <property type="entry name" value="Small_GTP-bd"/>
</dbReference>
<dbReference type="InterPro" id="IPR000795">
    <property type="entry name" value="T_Tr_GTP-bd_dom"/>
</dbReference>
<dbReference type="InterPro" id="IPR009000">
    <property type="entry name" value="Transl_B-barrel_sf"/>
</dbReference>
<dbReference type="NCBIfam" id="TIGR00503">
    <property type="entry name" value="prfC"/>
    <property type="match status" value="1"/>
</dbReference>
<dbReference type="NCBIfam" id="NF001964">
    <property type="entry name" value="PRK00741.1"/>
    <property type="match status" value="1"/>
</dbReference>
<dbReference type="NCBIfam" id="TIGR00231">
    <property type="entry name" value="small_GTP"/>
    <property type="match status" value="1"/>
</dbReference>
<dbReference type="PANTHER" id="PTHR43556">
    <property type="entry name" value="PEPTIDE CHAIN RELEASE FACTOR RF3"/>
    <property type="match status" value="1"/>
</dbReference>
<dbReference type="PANTHER" id="PTHR43556:SF2">
    <property type="entry name" value="PEPTIDE CHAIN RELEASE FACTOR RF3"/>
    <property type="match status" value="1"/>
</dbReference>
<dbReference type="Pfam" id="PF22042">
    <property type="entry name" value="EF-G_D2"/>
    <property type="match status" value="1"/>
</dbReference>
<dbReference type="Pfam" id="PF00009">
    <property type="entry name" value="GTP_EFTU"/>
    <property type="match status" value="1"/>
</dbReference>
<dbReference type="Pfam" id="PF16658">
    <property type="entry name" value="RF3_C"/>
    <property type="match status" value="1"/>
</dbReference>
<dbReference type="PRINTS" id="PR00315">
    <property type="entry name" value="ELONGATNFCT"/>
</dbReference>
<dbReference type="SUPFAM" id="SSF54980">
    <property type="entry name" value="EF-G C-terminal domain-like"/>
    <property type="match status" value="1"/>
</dbReference>
<dbReference type="SUPFAM" id="SSF52540">
    <property type="entry name" value="P-loop containing nucleoside triphosphate hydrolases"/>
    <property type="match status" value="1"/>
</dbReference>
<dbReference type="SUPFAM" id="SSF50447">
    <property type="entry name" value="Translation proteins"/>
    <property type="match status" value="1"/>
</dbReference>
<dbReference type="PROSITE" id="PS00301">
    <property type="entry name" value="G_TR_1"/>
    <property type="match status" value="1"/>
</dbReference>
<dbReference type="PROSITE" id="PS51722">
    <property type="entry name" value="G_TR_2"/>
    <property type="match status" value="1"/>
</dbReference>
<gene>
    <name evidence="1" type="primary">prfC</name>
    <name type="ordered locus">YpsIP31758_3504</name>
</gene>